<sequence length="355" mass="39911">MISKQQISEIISNYDLNDLAIATVCSHSSLQIFDGARKEGLRTIGICVGQPPRFYDAFPKAKPDEYIVVESYSDIPKIAEELVRKNAIVIPHGSFVEYMGTESFAELAVPTFGNREVLEWESDRDKEREWLEGAGIHMPKIVDPEKIESPVMVKYHGAKGGRGFFIAKDYEEFKQYIDPNEKHTVQEFIVGTRYYLHFFYSPIREEGYKLSEGILEMLSMDRRVESNADEIFRLGSPKELEDAGIHPTYVVTGNVPLVARESLLPRIFALGEKVVEESLGLFGGMIGPFCLETVFTDKLEIKVFEISARIVAGTNLYTSGSPYSDMIEENLSTGKRIAQEIKLGAKTGKLDLILS</sequence>
<proteinExistence type="inferred from homology"/>
<reference key="1">
    <citation type="journal article" date="2009" name="ISME J.">
        <title>The genome sequence of the psychrophilic archaeon, Methanococcoides burtonii: the role of genome evolution in cold adaptation.</title>
        <authorList>
            <person name="Allen M.A."/>
            <person name="Lauro F.M."/>
            <person name="Williams T.J."/>
            <person name="Burg D."/>
            <person name="Siddiqui K.S."/>
            <person name="De Francisci D."/>
            <person name="Chong K.W."/>
            <person name="Pilak O."/>
            <person name="Chew H.H."/>
            <person name="De Maere M.Z."/>
            <person name="Ting L."/>
            <person name="Katrib M."/>
            <person name="Ng C."/>
            <person name="Sowers K.R."/>
            <person name="Galperin M.Y."/>
            <person name="Anderson I.J."/>
            <person name="Ivanova N."/>
            <person name="Dalin E."/>
            <person name="Martinez M."/>
            <person name="Lapidus A."/>
            <person name="Hauser L."/>
            <person name="Land M."/>
            <person name="Thomas T."/>
            <person name="Cavicchioli R."/>
        </authorList>
    </citation>
    <scope>NUCLEOTIDE SEQUENCE [LARGE SCALE GENOMIC DNA]</scope>
    <source>
        <strain>DSM 6242 / NBRC 107633 / OCM 468 / ACE-M</strain>
    </source>
</reference>
<accession>Q12VJ6</accession>
<dbReference type="EC" id="6.3.4.23" evidence="2"/>
<dbReference type="EMBL" id="CP000300">
    <property type="protein sequence ID" value="ABE52530.1"/>
    <property type="molecule type" value="Genomic_DNA"/>
</dbReference>
<dbReference type="RefSeq" id="WP_011499674.1">
    <property type="nucleotide sequence ID" value="NC_007955.1"/>
</dbReference>
<dbReference type="SMR" id="Q12VJ6"/>
<dbReference type="STRING" id="259564.Mbur_1626"/>
<dbReference type="GeneID" id="3997260"/>
<dbReference type="KEGG" id="mbu:Mbur_1626"/>
<dbReference type="HOGENOM" id="CLU_065084_0_0_2"/>
<dbReference type="OrthoDB" id="98133at2157"/>
<dbReference type="UniPathway" id="UPA00074">
    <property type="reaction ID" value="UER00134"/>
</dbReference>
<dbReference type="Proteomes" id="UP000001979">
    <property type="component" value="Chromosome"/>
</dbReference>
<dbReference type="GO" id="GO:0005524">
    <property type="term" value="F:ATP binding"/>
    <property type="evidence" value="ECO:0007669"/>
    <property type="project" value="UniProtKB-KW"/>
</dbReference>
<dbReference type="GO" id="GO:0016879">
    <property type="term" value="F:ligase activity, forming carbon-nitrogen bonds"/>
    <property type="evidence" value="ECO:0007669"/>
    <property type="project" value="UniProtKB-UniRule"/>
</dbReference>
<dbReference type="GO" id="GO:0000287">
    <property type="term" value="F:magnesium ion binding"/>
    <property type="evidence" value="ECO:0007669"/>
    <property type="project" value="InterPro"/>
</dbReference>
<dbReference type="GO" id="GO:0006189">
    <property type="term" value="P:'de novo' IMP biosynthetic process"/>
    <property type="evidence" value="ECO:0007669"/>
    <property type="project" value="UniProtKB-UniRule"/>
</dbReference>
<dbReference type="Gene3D" id="3.40.50.20">
    <property type="match status" value="1"/>
</dbReference>
<dbReference type="Gene3D" id="3.30.1490.20">
    <property type="entry name" value="ATP-grasp fold, A domain"/>
    <property type="match status" value="1"/>
</dbReference>
<dbReference type="Gene3D" id="3.30.470.20">
    <property type="entry name" value="ATP-grasp fold, B domain"/>
    <property type="match status" value="1"/>
</dbReference>
<dbReference type="HAMAP" id="MF_01163">
    <property type="entry name" value="IMP_biosynth_PurP"/>
    <property type="match status" value="1"/>
</dbReference>
<dbReference type="InterPro" id="IPR011761">
    <property type="entry name" value="ATP-grasp"/>
</dbReference>
<dbReference type="InterPro" id="IPR013815">
    <property type="entry name" value="ATP_grasp_subdomain_1"/>
</dbReference>
<dbReference type="InterPro" id="IPR023656">
    <property type="entry name" value="IMP_biosynth_PurP"/>
</dbReference>
<dbReference type="InterPro" id="IPR009720">
    <property type="entry name" value="IMP_biosynth_PurP_C"/>
</dbReference>
<dbReference type="InterPro" id="IPR010672">
    <property type="entry name" value="IMP_biosynth_PurP_N"/>
</dbReference>
<dbReference type="InterPro" id="IPR016185">
    <property type="entry name" value="PreATP-grasp_dom_sf"/>
</dbReference>
<dbReference type="NCBIfam" id="NF009781">
    <property type="entry name" value="PRK13278.1-6"/>
    <property type="match status" value="1"/>
</dbReference>
<dbReference type="PANTHER" id="PTHR38147:SF2">
    <property type="entry name" value="5-FORMAMINOIMIDAZOLE-4-CARBOXAMIDE-1-(BETA)-D-RIBOFURANOSYL 5'-MONOPHOSPHATE SYNTHETASE"/>
    <property type="match status" value="1"/>
</dbReference>
<dbReference type="PANTHER" id="PTHR38147">
    <property type="entry name" value="5-FORMAMINOIMIDAZOLE-4-CARBOXAMIDE-1-(BETA)-D-RIBOFURANOSYL 5'-MONOPHOSPHATE SYNTHETASE-RELATED"/>
    <property type="match status" value="1"/>
</dbReference>
<dbReference type="Pfam" id="PF06849">
    <property type="entry name" value="DUF1246"/>
    <property type="match status" value="1"/>
</dbReference>
<dbReference type="Pfam" id="PF06973">
    <property type="entry name" value="DUF1297"/>
    <property type="match status" value="1"/>
</dbReference>
<dbReference type="PIRSF" id="PIRSF004602">
    <property type="entry name" value="ATPgrasp_PurP"/>
    <property type="match status" value="1"/>
</dbReference>
<dbReference type="SUPFAM" id="SSF56059">
    <property type="entry name" value="Glutathione synthetase ATP-binding domain-like"/>
    <property type="match status" value="1"/>
</dbReference>
<dbReference type="SUPFAM" id="SSF52440">
    <property type="entry name" value="PreATP-grasp domain"/>
    <property type="match status" value="1"/>
</dbReference>
<dbReference type="PROSITE" id="PS50975">
    <property type="entry name" value="ATP_GRASP"/>
    <property type="match status" value="1"/>
</dbReference>
<protein>
    <recommendedName>
        <fullName evidence="2">5-formaminoimidazole-4-carboxamide-1-(beta)-D-ribofuranosyl 5'-monophosphate synthetase</fullName>
        <ecNumber evidence="2">6.3.4.23</ecNumber>
    </recommendedName>
    <alternativeName>
        <fullName evidence="2">5-aminoimidazole-4-carboxamide-1-beta-D-ribofuranosyl 5'-monophosphate--formate ligase</fullName>
    </alternativeName>
</protein>
<keyword id="KW-0067">ATP-binding</keyword>
<keyword id="KW-0436">Ligase</keyword>
<keyword id="KW-0460">Magnesium</keyword>
<keyword id="KW-0464">Manganese</keyword>
<keyword id="KW-0479">Metal-binding</keyword>
<keyword id="KW-0547">Nucleotide-binding</keyword>
<keyword id="KW-0658">Purine biosynthesis</keyword>
<evidence type="ECO:0000250" key="1"/>
<evidence type="ECO:0000255" key="2">
    <source>
        <dbReference type="HAMAP-Rule" id="MF_01163"/>
    </source>
</evidence>
<organism>
    <name type="scientific">Methanococcoides burtonii (strain DSM 6242 / NBRC 107633 / OCM 468 / ACE-M)</name>
    <dbReference type="NCBI Taxonomy" id="259564"/>
    <lineage>
        <taxon>Archaea</taxon>
        <taxon>Methanobacteriati</taxon>
        <taxon>Methanobacteriota</taxon>
        <taxon>Stenosarchaea group</taxon>
        <taxon>Methanomicrobia</taxon>
        <taxon>Methanosarcinales</taxon>
        <taxon>Methanosarcinaceae</taxon>
        <taxon>Methanococcoides</taxon>
    </lineage>
</organism>
<gene>
    <name evidence="2" type="primary">purP</name>
    <name type="ordered locus">Mbur_1626</name>
</gene>
<comment type="function">
    <text evidence="2">Catalyzes the ATP- and formate-dependent formylation of 5-aminoimidazole-4-carboxamide-1-beta-d-ribofuranosyl 5'-monophosphate (AICAR) to 5-formaminoimidazole-4-carboxamide-1-beta-d-ribofuranosyl 5'-monophosphate (FAICAR) in the absence of folates.</text>
</comment>
<comment type="catalytic activity">
    <reaction evidence="2">
        <text>5-amino-1-(5-phospho-beta-D-ribosyl)imidazole-4-carboxamide + formate + ATP = 5-formamido-1-(5-phospho-D-ribosyl)imidazole-4-carboxamide + ADP + phosphate</text>
        <dbReference type="Rhea" id="RHEA:24836"/>
        <dbReference type="ChEBI" id="CHEBI:15740"/>
        <dbReference type="ChEBI" id="CHEBI:30616"/>
        <dbReference type="ChEBI" id="CHEBI:43474"/>
        <dbReference type="ChEBI" id="CHEBI:58467"/>
        <dbReference type="ChEBI" id="CHEBI:58475"/>
        <dbReference type="ChEBI" id="CHEBI:456216"/>
        <dbReference type="EC" id="6.3.4.23"/>
    </reaction>
</comment>
<comment type="cofactor">
    <cofactor evidence="1">
        <name>Mg(2+)</name>
        <dbReference type="ChEBI" id="CHEBI:18420"/>
    </cofactor>
    <cofactor evidence="1">
        <name>Mn(2+)</name>
        <dbReference type="ChEBI" id="CHEBI:29035"/>
    </cofactor>
    <text evidence="1">Binds 1 Mg(2+) or Mn(2+) ion per subunit.</text>
</comment>
<comment type="pathway">
    <text evidence="2">Purine metabolism; IMP biosynthesis via de novo pathway; 5-formamido-1-(5-phospho-D-ribosyl)imidazole-4-carboxamide from 5-amino-1-(5-phospho-D-ribosyl)imidazole-4-carboxamide (formate route): step 1/1.</text>
</comment>
<comment type="similarity">
    <text evidence="2">Belongs to the phosphohexose mutase family.</text>
</comment>
<feature type="chain" id="PRO_0000348619" description="5-formaminoimidazole-4-carboxamide-1-(beta)-D-ribofuranosyl 5'-monophosphate synthetase">
    <location>
        <begin position="1"/>
        <end position="355"/>
    </location>
</feature>
<feature type="domain" description="ATP-grasp" evidence="2">
    <location>
        <begin position="101"/>
        <end position="332"/>
    </location>
</feature>
<feature type="binding site" evidence="2">
    <location>
        <position position="27"/>
    </location>
    <ligand>
        <name>5-amino-1-(5-phospho-beta-D-ribosyl)imidazole-4-carboxamide</name>
        <dbReference type="ChEBI" id="CHEBI:58475"/>
    </ligand>
</feature>
<feature type="binding site" evidence="2">
    <location>
        <position position="94"/>
    </location>
    <ligand>
        <name>5-amino-1-(5-phospho-beta-D-ribosyl)imidazole-4-carboxamide</name>
        <dbReference type="ChEBI" id="CHEBI:58475"/>
    </ligand>
</feature>
<feature type="binding site" evidence="2">
    <location>
        <begin position="144"/>
        <end position="195"/>
    </location>
    <ligand>
        <name>ATP</name>
        <dbReference type="ChEBI" id="CHEBI:30616"/>
    </ligand>
</feature>
<feature type="binding site" evidence="2">
    <location>
        <position position="225"/>
    </location>
    <ligand>
        <name>ATP</name>
        <dbReference type="ChEBI" id="CHEBI:30616"/>
    </ligand>
</feature>
<feature type="binding site" evidence="2">
    <location>
        <position position="254"/>
    </location>
    <ligand>
        <name>5-amino-1-(5-phospho-beta-D-ribosyl)imidazole-4-carboxamide</name>
        <dbReference type="ChEBI" id="CHEBI:58475"/>
    </ligand>
</feature>
<feature type="binding site" evidence="2">
    <location>
        <position position="292"/>
    </location>
    <ligand>
        <name>Mg(2+)</name>
        <dbReference type="ChEBI" id="CHEBI:18420"/>
    </ligand>
</feature>
<feature type="binding site" evidence="2">
    <location>
        <position position="305"/>
    </location>
    <ligand>
        <name>Mg(2+)</name>
        <dbReference type="ChEBI" id="CHEBI:18420"/>
    </ligand>
</feature>
<name>PURP_METBU</name>